<comment type="function">
    <text evidence="6 7 8 9 15">Catalyzes the phospholipid dependent N-acylation of the N-terminal cysteine of apolipoprotein, the last step in lipoprotein maturation (PubMed:2032623, PubMed:21676878, PubMed:28675161, PubMed:28885614). Utilizes a two-step reaction via a ping-pong mechanism (PubMed:21676878, PubMed:28675161). Lnt undergoes covalent modification in the presence of phospholipids, resulting in a thioester acyl-enzyme intermediate. It then transfers the acyl chain to the amine group of the N-terminal diacylglyceryl-modified cysteine of apolipoprotein, leading to the formation of mature triacylated lipoprotein (PubMed:21676878, PubMed:28675161). In vitro, can utilize the phospholipids phosphatidylethanolamine (PE), phosphatidylglycerol (PG), phosphatidic acid (PA) or cardiolipin (CL) (PubMed:2032623, PubMed:21676878). PE is the most efficient acyl donor (PubMed:21676878).</text>
</comment>
<comment type="catalytic activity">
    <reaction evidence="1 7 8 9">
        <text>N-terminal S-1,2-diacyl-sn-glyceryl-L-cysteinyl-[lipoprotein] + a glycerophospholipid = N-acyl-S-1,2-diacyl-sn-glyceryl-L-cysteinyl-[lipoprotein] + a 2-acyl-sn-glycero-3-phospholipid + H(+)</text>
        <dbReference type="Rhea" id="RHEA:48228"/>
        <dbReference type="Rhea" id="RHEA-COMP:14681"/>
        <dbReference type="Rhea" id="RHEA-COMP:14684"/>
        <dbReference type="ChEBI" id="CHEBI:15378"/>
        <dbReference type="ChEBI" id="CHEBI:136912"/>
        <dbReference type="ChEBI" id="CHEBI:140656"/>
        <dbReference type="ChEBI" id="CHEBI:140657"/>
        <dbReference type="ChEBI" id="CHEBI:140660"/>
        <dbReference type="EC" id="2.3.1.269"/>
    </reaction>
</comment>
<comment type="pathway">
    <text evidence="1">Protein modification; lipoprotein biosynthesis (N-acyl transfer).</text>
</comment>
<comment type="subunit">
    <text evidence="9">Monomer.</text>
</comment>
<comment type="interaction">
    <interactant intactId="EBI-556569">
        <id>P23930</id>
    </interactant>
    <interactant intactId="EBI-368956">
        <id>P21599</id>
        <label>pykA</label>
    </interactant>
    <organismsDiffer>false</organismsDiffer>
    <experiments>3</experiments>
</comment>
<comment type="subcellular location">
    <subcellularLocation>
        <location evidence="1 2 3 6 8 9">Cell inner membrane</location>
        <topology evidence="1 2 8 9">Multi-pass membrane protein</topology>
    </subcellularLocation>
</comment>
<comment type="disruption phenotype">
    <text evidence="2 5">Essential. Depletion induces juxtapositioning of inner and outer membranes and alters the architecture of the cell envelope. It causes mislocalization of outer membrane lipoproteins (PubMed:15513925). The mutant has a copper-sensitive, temperature sensitive phenotype (PubMed:1938881).</text>
</comment>
<comment type="similarity">
    <text evidence="1 13">Belongs to the CN hydrolase family. Apolipoprotein N-acyltransferase subfamily.</text>
</comment>
<dbReference type="EC" id="2.3.1.269" evidence="1 7 8 9"/>
<dbReference type="EMBL" id="X58070">
    <property type="protein sequence ID" value="CAA41100.1"/>
    <property type="molecule type" value="Genomic_DNA"/>
</dbReference>
<dbReference type="EMBL" id="U82598">
    <property type="protein sequence ID" value="AAB40859.1"/>
    <property type="molecule type" value="Genomic_DNA"/>
</dbReference>
<dbReference type="EMBL" id="U00096">
    <property type="protein sequence ID" value="AAC73758.1"/>
    <property type="molecule type" value="Genomic_DNA"/>
</dbReference>
<dbReference type="EMBL" id="AP009048">
    <property type="protein sequence ID" value="BAA35308.2"/>
    <property type="molecule type" value="Genomic_DNA"/>
</dbReference>
<dbReference type="PIR" id="S18194">
    <property type="entry name" value="S18194"/>
</dbReference>
<dbReference type="RefSeq" id="NP_415190.1">
    <property type="nucleotide sequence ID" value="NC_000913.3"/>
</dbReference>
<dbReference type="RefSeq" id="WP_000853021.1">
    <property type="nucleotide sequence ID" value="NZ_SSZK01000037.1"/>
</dbReference>
<dbReference type="PDB" id="5N6H">
    <property type="method" value="X-ray"/>
    <property type="resolution" value="2.90 A"/>
    <property type="chains" value="A/B=1-512"/>
</dbReference>
<dbReference type="PDB" id="5N6L">
    <property type="method" value="X-ray"/>
    <property type="resolution" value="2.90 A"/>
    <property type="chains" value="A/B=1-512"/>
</dbReference>
<dbReference type="PDB" id="5XHQ">
    <property type="method" value="X-ray"/>
    <property type="resolution" value="2.59 A"/>
    <property type="chains" value="A/B=1-508"/>
</dbReference>
<dbReference type="PDB" id="6NWR">
    <property type="method" value="X-ray"/>
    <property type="resolution" value="3.50 A"/>
    <property type="chains" value="A/B=1-512"/>
</dbReference>
<dbReference type="PDB" id="6Q3A">
    <property type="method" value="X-ray"/>
    <property type="resolution" value="3.10 A"/>
    <property type="chains" value="A=1-512"/>
</dbReference>
<dbReference type="PDB" id="7ACI">
    <property type="method" value="X-ray"/>
    <property type="resolution" value="2.30 A"/>
    <property type="chains" value="A=1-512"/>
</dbReference>
<dbReference type="PDB" id="8AQ3">
    <property type="method" value="X-ray"/>
    <property type="resolution" value="2.40 A"/>
    <property type="chains" value="A=1-512"/>
</dbReference>
<dbReference type="PDB" id="8AQ4">
    <property type="method" value="X-ray"/>
    <property type="resolution" value="2.62 A"/>
    <property type="chains" value="A=1-512"/>
</dbReference>
<dbReference type="PDB" id="8B0K">
    <property type="method" value="EM"/>
    <property type="resolution" value="3.00 A"/>
    <property type="chains" value="A=1-512"/>
</dbReference>
<dbReference type="PDB" id="8B0L">
    <property type="method" value="EM"/>
    <property type="resolution" value="3.13 A"/>
    <property type="chains" value="A=1-512"/>
</dbReference>
<dbReference type="PDB" id="8B0M">
    <property type="method" value="EM"/>
    <property type="resolution" value="3.01 A"/>
    <property type="chains" value="A=1-512"/>
</dbReference>
<dbReference type="PDB" id="8B0N">
    <property type="method" value="EM"/>
    <property type="resolution" value="2.67 A"/>
    <property type="chains" value="A=1-512"/>
</dbReference>
<dbReference type="PDB" id="8B0O">
    <property type="method" value="EM"/>
    <property type="resolution" value="3.02 A"/>
    <property type="chains" value="A=1-512"/>
</dbReference>
<dbReference type="PDB" id="8B0P">
    <property type="method" value="EM"/>
    <property type="resolution" value="2.86 A"/>
    <property type="chains" value="A=1-512"/>
</dbReference>
<dbReference type="PDB" id="8Q2P">
    <property type="method" value="X-ray"/>
    <property type="resolution" value="1.90 A"/>
    <property type="chains" value="A=1-510"/>
</dbReference>
<dbReference type="PDB" id="8RQR">
    <property type="method" value="X-ray"/>
    <property type="resolution" value="2.19 A"/>
    <property type="chains" value="A=1-512"/>
</dbReference>
<dbReference type="PDBsum" id="5N6H"/>
<dbReference type="PDBsum" id="5N6L"/>
<dbReference type="PDBsum" id="5XHQ"/>
<dbReference type="PDBsum" id="6NWR"/>
<dbReference type="PDBsum" id="6Q3A"/>
<dbReference type="PDBsum" id="7ACI"/>
<dbReference type="PDBsum" id="8AQ3"/>
<dbReference type="PDBsum" id="8AQ4"/>
<dbReference type="PDBsum" id="8B0K"/>
<dbReference type="PDBsum" id="8B0L"/>
<dbReference type="PDBsum" id="8B0M"/>
<dbReference type="PDBsum" id="8B0N"/>
<dbReference type="PDBsum" id="8B0O"/>
<dbReference type="PDBsum" id="8B0P"/>
<dbReference type="PDBsum" id="8Q2P"/>
<dbReference type="PDBsum" id="8RQR"/>
<dbReference type="EMDB" id="EMD-15786"/>
<dbReference type="EMDB" id="EMD-15787"/>
<dbReference type="EMDB" id="EMD-15788"/>
<dbReference type="EMDB" id="EMD-15789"/>
<dbReference type="EMDB" id="EMD-15790"/>
<dbReference type="EMDB" id="EMD-15791"/>
<dbReference type="SMR" id="P23930"/>
<dbReference type="BioGRID" id="4259916">
    <property type="interactions" value="206"/>
</dbReference>
<dbReference type="BioGRID" id="850561">
    <property type="interactions" value="1"/>
</dbReference>
<dbReference type="DIP" id="DIP-10111N"/>
<dbReference type="FunCoup" id="P23930">
    <property type="interactions" value="472"/>
</dbReference>
<dbReference type="IntAct" id="P23930">
    <property type="interactions" value="2"/>
</dbReference>
<dbReference type="STRING" id="511145.b0657"/>
<dbReference type="jPOST" id="P23930"/>
<dbReference type="PaxDb" id="511145-b0657"/>
<dbReference type="EnsemblBacteria" id="AAC73758">
    <property type="protein sequence ID" value="AAC73758"/>
    <property type="gene ID" value="b0657"/>
</dbReference>
<dbReference type="GeneID" id="946201"/>
<dbReference type="KEGG" id="ecj:JW0654"/>
<dbReference type="KEGG" id="eco:b0657"/>
<dbReference type="KEGG" id="ecoc:C3026_03285"/>
<dbReference type="PATRIC" id="fig|1411691.4.peg.1611"/>
<dbReference type="EchoBASE" id="EB0166"/>
<dbReference type="eggNOG" id="COG0815">
    <property type="taxonomic scope" value="Bacteria"/>
</dbReference>
<dbReference type="HOGENOM" id="CLU_019563_3_0_6"/>
<dbReference type="InParanoid" id="P23930"/>
<dbReference type="OMA" id="YVALVPW"/>
<dbReference type="OrthoDB" id="9804277at2"/>
<dbReference type="PhylomeDB" id="P23930"/>
<dbReference type="BioCyc" id="EcoCyc:EG10168-MONOMER"/>
<dbReference type="BioCyc" id="MetaCyc:EG10168-MONOMER"/>
<dbReference type="BRENDA" id="2.3.1.269">
    <property type="organism ID" value="2026"/>
</dbReference>
<dbReference type="UniPathway" id="UPA00666"/>
<dbReference type="PRO" id="PR:P23930"/>
<dbReference type="Proteomes" id="UP000000625">
    <property type="component" value="Chromosome"/>
</dbReference>
<dbReference type="GO" id="GO:0030288">
    <property type="term" value="C:outer membrane-bounded periplasmic space"/>
    <property type="evidence" value="ECO:0000314"/>
    <property type="project" value="EcoCyc"/>
</dbReference>
<dbReference type="GO" id="GO:0005886">
    <property type="term" value="C:plasma membrane"/>
    <property type="evidence" value="ECO:0000314"/>
    <property type="project" value="EcoCyc"/>
</dbReference>
<dbReference type="GO" id="GO:0016410">
    <property type="term" value="F:N-acyltransferase activity"/>
    <property type="evidence" value="ECO:0000314"/>
    <property type="project" value="EcoCyc"/>
</dbReference>
<dbReference type="GO" id="GO:0042158">
    <property type="term" value="P:lipoprotein biosynthetic process"/>
    <property type="evidence" value="ECO:0000314"/>
    <property type="project" value="EcoCyc"/>
</dbReference>
<dbReference type="CDD" id="cd07571">
    <property type="entry name" value="ALP_N-acyl_transferase"/>
    <property type="match status" value="1"/>
</dbReference>
<dbReference type="FunFam" id="3.60.110.10:FF:000015">
    <property type="entry name" value="Apolipoprotein N-acyltransferase"/>
    <property type="match status" value="1"/>
</dbReference>
<dbReference type="Gene3D" id="3.60.110.10">
    <property type="entry name" value="Carbon-nitrogen hydrolase"/>
    <property type="match status" value="1"/>
</dbReference>
<dbReference type="HAMAP" id="MF_01148">
    <property type="entry name" value="Lnt"/>
    <property type="match status" value="1"/>
</dbReference>
<dbReference type="InterPro" id="IPR004563">
    <property type="entry name" value="Apolipo_AcylTrfase"/>
</dbReference>
<dbReference type="InterPro" id="IPR003010">
    <property type="entry name" value="C-N_Hydrolase"/>
</dbReference>
<dbReference type="InterPro" id="IPR036526">
    <property type="entry name" value="C-N_Hydrolase_sf"/>
</dbReference>
<dbReference type="InterPro" id="IPR045378">
    <property type="entry name" value="LNT_N"/>
</dbReference>
<dbReference type="NCBIfam" id="TIGR00546">
    <property type="entry name" value="lnt"/>
    <property type="match status" value="1"/>
</dbReference>
<dbReference type="PANTHER" id="PTHR38686">
    <property type="entry name" value="APOLIPOPROTEIN N-ACYLTRANSFERASE"/>
    <property type="match status" value="1"/>
</dbReference>
<dbReference type="PANTHER" id="PTHR38686:SF1">
    <property type="entry name" value="APOLIPOPROTEIN N-ACYLTRANSFERASE"/>
    <property type="match status" value="1"/>
</dbReference>
<dbReference type="Pfam" id="PF00795">
    <property type="entry name" value="CN_hydrolase"/>
    <property type="match status" value="1"/>
</dbReference>
<dbReference type="Pfam" id="PF20154">
    <property type="entry name" value="LNT_N"/>
    <property type="match status" value="1"/>
</dbReference>
<dbReference type="SUPFAM" id="SSF56317">
    <property type="entry name" value="Carbon-nitrogen hydrolase"/>
    <property type="match status" value="1"/>
</dbReference>
<dbReference type="PROSITE" id="PS50263">
    <property type="entry name" value="CN_HYDROLASE"/>
    <property type="match status" value="1"/>
</dbReference>
<keyword id="KW-0002">3D-structure</keyword>
<keyword id="KW-0012">Acyltransferase</keyword>
<keyword id="KW-0997">Cell inner membrane</keyword>
<keyword id="KW-1003">Cell membrane</keyword>
<keyword id="KW-0472">Membrane</keyword>
<keyword id="KW-1185">Reference proteome</keyword>
<keyword id="KW-0808">Transferase</keyword>
<keyword id="KW-0812">Transmembrane</keyword>
<keyword id="KW-1133">Transmembrane helix</keyword>
<proteinExistence type="evidence at protein level"/>
<gene>
    <name evidence="1 10" type="primary">lnt</name>
    <name evidence="11" type="synonym">cutE</name>
    <name type="ordered locus">b0657</name>
    <name type="ordered locus">JW0654</name>
</gene>
<sequence length="512" mass="57066">MAFASLIERQRIRLLLALLFGACGTLAFSPYDVWPAAIISLMGLQALTFNRRPLQSAAIGFCWGFGLFGSGINWVYVSIATFGGMPGPVNIFLVVLLAAYLSLYTGLFAGVLSRLWPKTTWLRVAIAAPALWQVTEFLRGWVLTGFPWLQFGYSQIDGPLKGLAPIMGVEAINFLLMMVSGLLALALVKRNWRPLVVAVVLFALPFPLRYIQWFTPQPEKTIQVSMVQGDIPQSLKWDEGQLLNTLKIYYNATAPLMGKSSLIIWPESAITDLEINQQPFLKALDGELRDKGSSLVTGIVDARLNKQNRYDTYNTIITLGKGAPYSYESADRYNKNHLVPFGEFVPLESILRPLAPFFDLPMSSFSRGPYIQPPLSANGIELTAAICYEIILGEQVRDNFRPDTDYLLTISNDAWFGKSIGPWQHFQMARMRALELARPLLRSTNNGITAVIGPQGEIQAMIPQFTREVLTTNVTPTTGLTPYARTGNWPLWVLTALFGFAAVLMSLRQRRK</sequence>
<organism>
    <name type="scientific">Escherichia coli (strain K12)</name>
    <dbReference type="NCBI Taxonomy" id="83333"/>
    <lineage>
        <taxon>Bacteria</taxon>
        <taxon>Pseudomonadati</taxon>
        <taxon>Pseudomonadota</taxon>
        <taxon>Gammaproteobacteria</taxon>
        <taxon>Enterobacterales</taxon>
        <taxon>Enterobacteriaceae</taxon>
        <taxon>Escherichia</taxon>
    </lineage>
</organism>
<accession>P23930</accession>
<accession>P77703</accession>
<name>LNT_ECOLI</name>
<reference key="1">
    <citation type="journal article" date="1991" name="J. Bacteriol.">
        <title>Cloning and characterization of cutE, a gene involved in copper transport in Escherichia coli.</title>
        <authorList>
            <person name="Rogers S.D."/>
            <person name="Bhave M.R."/>
            <person name="Mercer J.F.B."/>
            <person name="Camakaris J."/>
            <person name="Lee B.T.O."/>
        </authorList>
    </citation>
    <scope>NUCLEOTIDE SEQUENCE [GENOMIC DNA]</scope>
    <scope>DISRUPTION PHENOTYPE</scope>
    <source>
        <strain>K12</strain>
    </source>
</reference>
<reference key="2">
    <citation type="journal article" date="1996" name="DNA Res.">
        <title>A 718-kb DNA sequence of the Escherichia coli K-12 genome corresponding to the 12.7-28.0 min region on the linkage map.</title>
        <authorList>
            <person name="Oshima T."/>
            <person name="Aiba H."/>
            <person name="Baba T."/>
            <person name="Fujita K."/>
            <person name="Hayashi K."/>
            <person name="Honjo A."/>
            <person name="Ikemoto K."/>
            <person name="Inada T."/>
            <person name="Itoh T."/>
            <person name="Kajihara M."/>
            <person name="Kanai K."/>
            <person name="Kashimoto K."/>
            <person name="Kimura S."/>
            <person name="Kitagawa M."/>
            <person name="Makino K."/>
            <person name="Masuda S."/>
            <person name="Miki T."/>
            <person name="Mizobuchi K."/>
            <person name="Mori H."/>
            <person name="Motomura K."/>
            <person name="Nakamura Y."/>
            <person name="Nashimoto H."/>
            <person name="Nishio Y."/>
            <person name="Saito N."/>
            <person name="Sampei G."/>
            <person name="Seki Y."/>
            <person name="Tagami H."/>
            <person name="Takemoto K."/>
            <person name="Wada C."/>
            <person name="Yamamoto Y."/>
            <person name="Yano M."/>
            <person name="Horiuchi T."/>
        </authorList>
    </citation>
    <scope>NUCLEOTIDE SEQUENCE [LARGE SCALE GENOMIC DNA]</scope>
    <source>
        <strain>K12 / W3110 / ATCC 27325 / DSM 5911</strain>
    </source>
</reference>
<reference key="3">
    <citation type="submission" date="1997-01" db="EMBL/GenBank/DDBJ databases">
        <title>Sequence of minutes 4-25 of Escherichia coli.</title>
        <authorList>
            <person name="Chung E."/>
            <person name="Allen E."/>
            <person name="Araujo R."/>
            <person name="Aparicio A.M."/>
            <person name="Davis K."/>
            <person name="Duncan M."/>
            <person name="Federspiel N."/>
            <person name="Hyman R."/>
            <person name="Kalman S."/>
            <person name="Komp C."/>
            <person name="Kurdi O."/>
            <person name="Lew H."/>
            <person name="Lin D."/>
            <person name="Namath A."/>
            <person name="Oefner P."/>
            <person name="Roberts D."/>
            <person name="Schramm S."/>
            <person name="Davis R.W."/>
        </authorList>
    </citation>
    <scope>NUCLEOTIDE SEQUENCE [LARGE SCALE GENOMIC DNA]</scope>
    <source>
        <strain>K12 / MG1655 / ATCC 47076</strain>
    </source>
</reference>
<reference key="4">
    <citation type="journal article" date="1997" name="Science">
        <title>The complete genome sequence of Escherichia coli K-12.</title>
        <authorList>
            <person name="Blattner F.R."/>
            <person name="Plunkett G. III"/>
            <person name="Bloch C.A."/>
            <person name="Perna N.T."/>
            <person name="Burland V."/>
            <person name="Riley M."/>
            <person name="Collado-Vides J."/>
            <person name="Glasner J.D."/>
            <person name="Rode C.K."/>
            <person name="Mayhew G.F."/>
            <person name="Gregor J."/>
            <person name="Davis N.W."/>
            <person name="Kirkpatrick H.A."/>
            <person name="Goeden M.A."/>
            <person name="Rose D.J."/>
            <person name="Mau B."/>
            <person name="Shao Y."/>
        </authorList>
    </citation>
    <scope>NUCLEOTIDE SEQUENCE [LARGE SCALE GENOMIC DNA]</scope>
    <source>
        <strain>K12 / MG1655 / ATCC 47076</strain>
    </source>
</reference>
<reference key="5">
    <citation type="journal article" date="2006" name="Mol. Syst. Biol.">
        <title>Highly accurate genome sequences of Escherichia coli K-12 strains MG1655 and W3110.</title>
        <authorList>
            <person name="Hayashi K."/>
            <person name="Morooka N."/>
            <person name="Yamamoto Y."/>
            <person name="Fujita K."/>
            <person name="Isono K."/>
            <person name="Choi S."/>
            <person name="Ohtsubo E."/>
            <person name="Baba T."/>
            <person name="Wanner B.L."/>
            <person name="Mori H."/>
            <person name="Horiuchi T."/>
        </authorList>
    </citation>
    <scope>NUCLEOTIDE SEQUENCE [LARGE SCALE GENOMIC DNA]</scope>
    <scope>SEQUENCE REVISION TO 186</scope>
    <source>
        <strain>K12 / W3110 / ATCC 27325 / DSM 5911</strain>
    </source>
</reference>
<reference key="6">
    <citation type="journal article" date="1991" name="FEMS Microbiol. Lett.">
        <title>Identification and subcellular localization of apolipoprotein N-acyltransferase in Escherichia coli.</title>
        <authorList>
            <person name="Gupta S.D."/>
            <person name="Wu H.C."/>
        </authorList>
    </citation>
    <scope>FUNCTION</scope>
    <scope>SUBCELLULAR LOCATION</scope>
</reference>
<reference key="7">
    <citation type="journal article" date="1993" name="J. Biol. Chem.">
        <title>Characterization of a temperature-sensitive mutant of Salmonella typhimurium defective in apolipoprotein N-acyltransferase.</title>
        <authorList>
            <person name="Gupta S.D."/>
            <person name="Gan K."/>
            <person name="Schmid M.B."/>
            <person name="Wu H.C."/>
        </authorList>
    </citation>
    <scope>PROBABLE FUNCTION</scope>
</reference>
<reference key="8">
    <citation type="journal article" date="2005" name="J. Biol. Chem.">
        <title>Depletion of apolipoprotein N-acyltransferase causes mislocalization of outer membrane lipoproteins in Escherichia coli.</title>
        <authorList>
            <person name="Robichon C."/>
            <person name="Vidal-Ingigliardi D."/>
            <person name="Pugsley A.P."/>
        </authorList>
    </citation>
    <scope>SUBCELLULAR LOCATION</scope>
    <scope>DISRUPTION PHENOTYPE</scope>
</reference>
<reference key="9">
    <citation type="journal article" date="2005" name="Science">
        <title>Global topology analysis of the Escherichia coli inner membrane proteome.</title>
        <authorList>
            <person name="Daley D.O."/>
            <person name="Rapp M."/>
            <person name="Granseth E."/>
            <person name="Melen K."/>
            <person name="Drew D."/>
            <person name="von Heijne G."/>
        </authorList>
    </citation>
    <scope>SUBCELLULAR LOCATION</scope>
    <source>
        <strain>K12 / MG1655 / ATCC 47076</strain>
    </source>
</reference>
<reference key="10">
    <citation type="journal article" date="2007" name="J. Bacteriol.">
        <title>Identification of essential residues in apolipoprotein N-acyl transferase, a member of the CN hydrolase family.</title>
        <authorList>
            <person name="Vidal-Ingigliardi D."/>
            <person name="Lewenza S."/>
            <person name="Buddelmeijer N."/>
        </authorList>
    </citation>
    <scope>MUTAGENESIS OF TRP-148; TRP-237; GLU-267; LYS-335; GLU-343; CYS-387; TYR-388 AND GLU-389</scope>
</reference>
<reference key="11">
    <citation type="journal article" date="2011" name="J. Biol. Chem.">
        <title>Kinetics and phospholipid specificity of apolipoprotein N-acyltransferase.</title>
        <authorList>
            <person name="Hillmann F."/>
            <person name="Argentini M."/>
            <person name="Buddelmeijer N."/>
        </authorList>
    </citation>
    <scope>FUNCTION</scope>
    <scope>CATALYTIC ACTIVITY</scope>
    <scope>REACTION MECHANISM</scope>
</reference>
<reference evidence="18" key="12">
    <citation type="journal article" date="2017" name="Nat. Commun.">
        <title>Crystal structure of E. coli apolipoprotein N-acyl transferase.</title>
        <authorList>
            <person name="Lu G."/>
            <person name="Xu Y."/>
            <person name="Zhang K."/>
            <person name="Xiong Y."/>
            <person name="Li H."/>
            <person name="Cui L."/>
            <person name="Wang X."/>
            <person name="Lou J."/>
            <person name="Zhai Y."/>
            <person name="Sun F."/>
            <person name="Zhang X.C."/>
        </authorList>
    </citation>
    <scope>X-RAY CRYSTALLOGRAPHY (2.59 ANGSTROMS) OF 1-508</scope>
    <scope>FUNCTION</scope>
    <scope>CATALYTIC ACTIVITY</scope>
    <scope>SUBUNIT</scope>
    <scope>SUBCELLULAR LOCATION</scope>
    <scope>TOPOLOGY</scope>
    <scope>MUTAGENESIS OF SER-78; GLY-145; GLU-267; LYS-335; VAL-339; GLY-342; GLU-343; ARG-352; CYS-387; TYR-388; GLU-389 AND PHE-416</scope>
    <source>
        <strain>K12</strain>
    </source>
</reference>
<reference evidence="16 17" key="13">
    <citation type="journal article" date="2017" name="Nat. Commun.">
        <title>Structural insights into the mechanism of the membrane integral N-acyltransferase step in bacterial lipoprotein synthesis.</title>
        <authorList>
            <person name="Wiktor M."/>
            <person name="Weichert D."/>
            <person name="Howe N."/>
            <person name="Huang C.Y."/>
            <person name="Olieric V."/>
            <person name="Boland C."/>
            <person name="Bailey J."/>
            <person name="Vogeley L."/>
            <person name="Stansfeld P.J."/>
            <person name="Buddelmeijer N."/>
            <person name="Wang M."/>
            <person name="Caffrey M."/>
        </authorList>
    </citation>
    <scope>X-RAY CRYSTALLOGRAPHY (2.90 ANGSTROMS) OF WILD-TYPE AND MUTANT ALA-387</scope>
    <scope>FUNCTION</scope>
    <scope>CATALYTIC ACTIVITY</scope>
    <scope>REACTION MECHANISM</scope>
    <scope>SUBCELLULAR LOCATION</scope>
    <scope>TOPOLOGY</scope>
    <scope>ACTIVE SITE</scope>
    <scope>MUTAGENESIS OF GLU-267; LYS-335 AND CYS-387</scope>
</reference>
<protein>
    <recommendedName>
        <fullName evidence="1 12">Apolipoprotein N-acyltransferase</fullName>
        <shortName evidence="1 12">ALP N-acyltransferase</shortName>
        <ecNumber evidence="1 7 8 9">2.3.1.269</ecNumber>
    </recommendedName>
    <alternativeName>
        <fullName>Copper homeostasis protein CutE</fullName>
    </alternativeName>
</protein>
<evidence type="ECO:0000255" key="1">
    <source>
        <dbReference type="HAMAP-Rule" id="MF_01148"/>
    </source>
</evidence>
<evidence type="ECO:0000269" key="2">
    <source>
    </source>
</evidence>
<evidence type="ECO:0000269" key="3">
    <source>
    </source>
</evidence>
<evidence type="ECO:0000269" key="4">
    <source>
    </source>
</evidence>
<evidence type="ECO:0000269" key="5">
    <source>
    </source>
</evidence>
<evidence type="ECO:0000269" key="6">
    <source>
    </source>
</evidence>
<evidence type="ECO:0000269" key="7">
    <source>
    </source>
</evidence>
<evidence type="ECO:0000269" key="8">
    <source>
    </source>
</evidence>
<evidence type="ECO:0000269" key="9">
    <source>
    </source>
</evidence>
<evidence type="ECO:0000303" key="10">
    <source>
    </source>
</evidence>
<evidence type="ECO:0000303" key="11">
    <source>
    </source>
</evidence>
<evidence type="ECO:0000303" key="12">
    <source>
    </source>
</evidence>
<evidence type="ECO:0000305" key="13"/>
<evidence type="ECO:0000305" key="14">
    <source>
    </source>
</evidence>
<evidence type="ECO:0000305" key="15">
    <source>
    </source>
</evidence>
<evidence type="ECO:0007744" key="16">
    <source>
        <dbReference type="PDB" id="5N6H"/>
    </source>
</evidence>
<evidence type="ECO:0007744" key="17">
    <source>
        <dbReference type="PDB" id="5N6L"/>
    </source>
</evidence>
<evidence type="ECO:0007744" key="18">
    <source>
        <dbReference type="PDB" id="5XHQ"/>
    </source>
</evidence>
<evidence type="ECO:0007829" key="19">
    <source>
        <dbReference type="PDB" id="5XHQ"/>
    </source>
</evidence>
<evidence type="ECO:0007829" key="20">
    <source>
        <dbReference type="PDB" id="7ACI"/>
    </source>
</evidence>
<evidence type="ECO:0007829" key="21">
    <source>
        <dbReference type="PDB" id="8AQ3"/>
    </source>
</evidence>
<evidence type="ECO:0007829" key="22">
    <source>
        <dbReference type="PDB" id="8B0K"/>
    </source>
</evidence>
<evidence type="ECO:0007829" key="23">
    <source>
        <dbReference type="PDB" id="8B0O"/>
    </source>
</evidence>
<evidence type="ECO:0007829" key="24">
    <source>
        <dbReference type="PDB" id="8B0P"/>
    </source>
</evidence>
<evidence type="ECO:0007829" key="25">
    <source>
        <dbReference type="PDB" id="8Q2P"/>
    </source>
</evidence>
<feature type="chain" id="PRO_0000178062" description="Apolipoprotein N-acyltransferase">
    <location>
        <begin position="1"/>
        <end position="512"/>
    </location>
</feature>
<feature type="topological domain" description="Cytoplasmic" evidence="8 9">
    <location>
        <begin position="1"/>
        <end position="9"/>
    </location>
</feature>
<feature type="transmembrane region" description="Helical" evidence="8">
    <location>
        <begin position="10"/>
        <end position="27"/>
    </location>
</feature>
<feature type="topological domain" description="Periplasmic" evidence="8 9">
    <location>
        <begin position="28"/>
        <end position="33"/>
    </location>
</feature>
<feature type="transmembrane region" description="Helical" evidence="8">
    <location>
        <begin position="34"/>
        <end position="48"/>
    </location>
</feature>
<feature type="topological domain" description="Cytoplasmic" evidence="8 9">
    <location>
        <begin position="49"/>
        <end position="52"/>
    </location>
</feature>
<feature type="transmembrane region" description="Helical" evidence="8">
    <location>
        <begin position="53"/>
        <end position="68"/>
    </location>
</feature>
<feature type="topological domain" description="Periplasmic" evidence="8 9">
    <location>
        <begin position="69"/>
        <end position="86"/>
    </location>
</feature>
<feature type="transmembrane region" description="Helical" evidence="8">
    <location>
        <begin position="87"/>
        <end position="116"/>
    </location>
</feature>
<feature type="topological domain" description="Cytoplasmic" evidence="8 9">
    <location>
        <begin position="117"/>
        <end position="120"/>
    </location>
</feature>
<feature type="transmembrane region" description="Helical" evidence="8">
    <location>
        <begin position="121"/>
        <end position="141"/>
    </location>
</feature>
<feature type="topological domain" description="Periplasmic" evidence="8 9">
    <location>
        <begin position="142"/>
        <end position="168"/>
    </location>
</feature>
<feature type="transmembrane region" description="Helical" evidence="8">
    <location>
        <begin position="169"/>
        <end position="189"/>
    </location>
</feature>
<feature type="topological domain" description="Cytoplasmic" evidence="8 9">
    <location>
        <begin position="190"/>
        <end position="191"/>
    </location>
</feature>
<feature type="transmembrane region" description="Helical" evidence="8">
    <location>
        <begin position="192"/>
        <end position="210"/>
    </location>
</feature>
<feature type="topological domain" description="Periplasmic" evidence="8 9">
    <location>
        <begin position="211"/>
        <end position="487"/>
    </location>
</feature>
<feature type="transmembrane region" description="Helical" evidence="8">
    <location>
        <begin position="488"/>
        <end position="508"/>
    </location>
</feature>
<feature type="topological domain" description="Cytoplasmic" evidence="8 9">
    <location>
        <begin position="509"/>
        <end position="512"/>
    </location>
</feature>
<feature type="domain" description="CN hydrolase" evidence="1">
    <location>
        <begin position="227"/>
        <end position="476"/>
    </location>
</feature>
<feature type="active site" description="Proton acceptor" evidence="1 14">
    <location>
        <position position="267"/>
    </location>
</feature>
<feature type="active site" evidence="1 14">
    <location>
        <position position="335"/>
    </location>
</feature>
<feature type="active site" description="Nucleophile" evidence="1 14">
    <location>
        <position position="387"/>
    </location>
</feature>
<feature type="mutagenesis site" description="Loss of activity." evidence="9">
    <original>S</original>
    <variation>W</variation>
    <location>
        <position position="78"/>
    </location>
</feature>
<feature type="mutagenesis site" description="Loss of activity." evidence="9">
    <original>G</original>
    <variation>A</variation>
    <location>
        <position position="145"/>
    </location>
</feature>
<feature type="mutagenesis site" description="Loss of activity." evidence="4">
    <original>W</original>
    <variation>A</variation>
    <location>
        <position position="148"/>
    </location>
</feature>
<feature type="mutagenesis site" description="Loss of activity." evidence="4">
    <original>W</original>
    <variation>A</variation>
    <location>
        <position position="237"/>
    </location>
</feature>
<feature type="mutagenesis site" description="Loss of activity." evidence="4 8 9">
    <original>E</original>
    <variation>A</variation>
    <variation>Q</variation>
    <location>
        <position position="267"/>
    </location>
</feature>
<feature type="mutagenesis site" description="Loss of activity." evidence="4 8 9">
    <original>K</original>
    <variation>A</variation>
    <location>
        <position position="335"/>
    </location>
</feature>
<feature type="mutagenesis site" description="Loss of activity." evidence="9">
    <original>V</original>
    <variation>A</variation>
    <location>
        <position position="339"/>
    </location>
</feature>
<feature type="mutagenesis site" description="Loss of activity." evidence="9">
    <original>V</original>
    <variation>G</variation>
    <location>
        <position position="339"/>
    </location>
</feature>
<feature type="mutagenesis site" description="Loss of activity." evidence="9">
    <original>G</original>
    <variation>A</variation>
    <location>
        <position position="342"/>
    </location>
</feature>
<feature type="mutagenesis site" description="Loss of activity." evidence="4 9">
    <original>E</original>
    <variation>A</variation>
    <location>
        <position position="343"/>
    </location>
</feature>
<feature type="mutagenesis site" description="Loss of activity." evidence="9">
    <original>R</original>
    <variation>A</variation>
    <location>
        <position position="352"/>
    </location>
</feature>
<feature type="mutagenesis site" description="Loss of activity." evidence="4 8 9">
    <original>C</original>
    <variation>A</variation>
    <variation>S</variation>
    <location>
        <position position="387"/>
    </location>
</feature>
<feature type="mutagenesis site" description="Loss of activity." evidence="4 9">
    <original>Y</original>
    <variation>A</variation>
    <variation>W</variation>
    <location>
        <position position="388"/>
    </location>
</feature>
<feature type="mutagenesis site" description="Loss of activity." evidence="4 9">
    <original>E</original>
    <variation>A</variation>
    <location>
        <position position="389"/>
    </location>
</feature>
<feature type="mutagenesis site" description="Loss of activity." evidence="9">
    <original>F</original>
    <variation>A</variation>
    <location>
        <position position="416"/>
    </location>
</feature>
<feature type="sequence conflict" description="In Ref. 2." evidence="13" ref="2">
    <original>A</original>
    <variation>V</variation>
    <location>
        <position position="186"/>
    </location>
</feature>
<feature type="helix" evidence="25">
    <location>
        <begin position="2"/>
        <end position="4"/>
    </location>
</feature>
<feature type="helix" evidence="25">
    <location>
        <begin position="6"/>
        <end position="25"/>
    </location>
</feature>
<feature type="turn" evidence="25">
    <location>
        <begin position="29"/>
        <end position="31"/>
    </location>
</feature>
<feature type="helix" evidence="25">
    <location>
        <begin position="35"/>
        <end position="47"/>
    </location>
</feature>
<feature type="turn" evidence="20">
    <location>
        <begin position="48"/>
        <end position="50"/>
    </location>
</feature>
<feature type="helix" evidence="25">
    <location>
        <begin position="53"/>
        <end position="71"/>
    </location>
</feature>
<feature type="turn" evidence="23">
    <location>
        <begin position="72"/>
        <end position="74"/>
    </location>
</feature>
<feature type="helix" evidence="25">
    <location>
        <begin position="75"/>
        <end position="82"/>
    </location>
</feature>
<feature type="helix" evidence="25">
    <location>
        <begin position="87"/>
        <end position="115"/>
    </location>
</feature>
<feature type="helix" evidence="25">
    <location>
        <begin position="121"/>
        <end position="125"/>
    </location>
</feature>
<feature type="helix" evidence="25">
    <location>
        <begin position="127"/>
        <end position="139"/>
    </location>
</feature>
<feature type="helix" evidence="25">
    <location>
        <begin position="142"/>
        <end position="144"/>
    </location>
</feature>
<feature type="helix" evidence="25">
    <location>
        <begin position="151"/>
        <end position="155"/>
    </location>
</feature>
<feature type="strand" evidence="21">
    <location>
        <begin position="156"/>
        <end position="158"/>
    </location>
</feature>
<feature type="helix" evidence="25">
    <location>
        <begin position="161"/>
        <end position="163"/>
    </location>
</feature>
<feature type="helix" evidence="25">
    <location>
        <begin position="164"/>
        <end position="167"/>
    </location>
</feature>
<feature type="helix" evidence="25">
    <location>
        <begin position="169"/>
        <end position="189"/>
    </location>
</feature>
<feature type="helix" evidence="25">
    <location>
        <begin position="192"/>
        <end position="203"/>
    </location>
</feature>
<feature type="helix" evidence="25">
    <location>
        <begin position="206"/>
        <end position="210"/>
    </location>
</feature>
<feature type="strand" evidence="25">
    <location>
        <begin position="214"/>
        <end position="216"/>
    </location>
</feature>
<feature type="helix" evidence="25">
    <location>
        <begin position="218"/>
        <end position="220"/>
    </location>
</feature>
<feature type="strand" evidence="25">
    <location>
        <begin position="222"/>
        <end position="228"/>
    </location>
</feature>
<feature type="helix" evidence="21">
    <location>
        <begin position="233"/>
        <end position="236"/>
    </location>
</feature>
<feature type="helix" evidence="25">
    <location>
        <begin position="239"/>
        <end position="253"/>
    </location>
</feature>
<feature type="helix" evidence="25">
    <location>
        <begin position="254"/>
        <end position="256"/>
    </location>
</feature>
<feature type="turn" evidence="25">
    <location>
        <begin position="257"/>
        <end position="259"/>
    </location>
</feature>
<feature type="strand" evidence="25">
    <location>
        <begin position="261"/>
        <end position="273"/>
    </location>
</feature>
<feature type="helix" evidence="25">
    <location>
        <begin position="274"/>
        <end position="277"/>
    </location>
</feature>
<feature type="helix" evidence="25">
    <location>
        <begin position="278"/>
        <end position="290"/>
    </location>
</feature>
<feature type="strand" evidence="25">
    <location>
        <begin position="294"/>
        <end position="304"/>
    </location>
</feature>
<feature type="turn" evidence="22">
    <location>
        <begin position="305"/>
        <end position="308"/>
    </location>
</feature>
<feature type="strand" evidence="25">
    <location>
        <begin position="310"/>
        <end position="320"/>
    </location>
</feature>
<feature type="strand" evidence="25">
    <location>
        <begin position="332"/>
        <end position="334"/>
    </location>
</feature>
<feature type="turn" evidence="25">
    <location>
        <begin position="340"/>
        <end position="342"/>
    </location>
</feature>
<feature type="helix" evidence="25">
    <location>
        <begin position="348"/>
        <end position="351"/>
    </location>
</feature>
<feature type="helix" evidence="25">
    <location>
        <begin position="352"/>
        <end position="354"/>
    </location>
</feature>
<feature type="helix" evidence="25">
    <location>
        <begin position="357"/>
        <end position="359"/>
    </location>
</feature>
<feature type="strand" evidence="25">
    <location>
        <begin position="375"/>
        <end position="377"/>
    </location>
</feature>
<feature type="strand" evidence="25">
    <location>
        <begin position="380"/>
        <end position="386"/>
    </location>
</feature>
<feature type="helix" evidence="25">
    <location>
        <begin position="387"/>
        <end position="391"/>
    </location>
</feature>
<feature type="helix" evidence="25">
    <location>
        <begin position="393"/>
        <end position="399"/>
    </location>
</feature>
<feature type="strand" evidence="25">
    <location>
        <begin position="406"/>
        <end position="411"/>
    </location>
</feature>
<feature type="helix" evidence="25">
    <location>
        <begin position="414"/>
        <end position="416"/>
    </location>
</feature>
<feature type="strand" evidence="24">
    <location>
        <begin position="418"/>
        <end position="420"/>
    </location>
</feature>
<feature type="helix" evidence="25">
    <location>
        <begin position="421"/>
        <end position="436"/>
    </location>
</feature>
<feature type="strand" evidence="25">
    <location>
        <begin position="440"/>
        <end position="447"/>
    </location>
</feature>
<feature type="strand" evidence="25">
    <location>
        <begin position="450"/>
        <end position="452"/>
    </location>
</feature>
<feature type="strand" evidence="25">
    <location>
        <begin position="458"/>
        <end position="461"/>
    </location>
</feature>
<feature type="strand" evidence="19">
    <location>
        <begin position="464"/>
        <end position="466"/>
    </location>
</feature>
<feature type="strand" evidence="25">
    <location>
        <begin position="468"/>
        <end position="474"/>
    </location>
</feature>
<feature type="strand" evidence="22">
    <location>
        <begin position="477"/>
        <end position="479"/>
    </location>
</feature>
<feature type="helix" evidence="25">
    <location>
        <begin position="482"/>
        <end position="486"/>
    </location>
</feature>
<feature type="helix" evidence="25">
    <location>
        <begin position="489"/>
        <end position="508"/>
    </location>
</feature>